<reference key="1">
    <citation type="journal article" date="2008" name="PLoS ONE">
        <title>Genome biology of Actinobacillus pleuropneumoniae JL03, an isolate of serotype 3 prevalent in China.</title>
        <authorList>
            <person name="Xu Z."/>
            <person name="Zhou Y."/>
            <person name="Li L."/>
            <person name="Zhou R."/>
            <person name="Xiao S."/>
            <person name="Wan Y."/>
            <person name="Zhang S."/>
            <person name="Wang K."/>
            <person name="Li W."/>
            <person name="Li L."/>
            <person name="Jin H."/>
            <person name="Kang M."/>
            <person name="Dalai B."/>
            <person name="Li T."/>
            <person name="Liu L."/>
            <person name="Cheng Y."/>
            <person name="Zhang L."/>
            <person name="Xu T."/>
            <person name="Zheng H."/>
            <person name="Pu S."/>
            <person name="Wang B."/>
            <person name="Gu W."/>
            <person name="Zhang X.L."/>
            <person name="Zhu G.-F."/>
            <person name="Wang S."/>
            <person name="Zhao G.-P."/>
            <person name="Chen H."/>
        </authorList>
    </citation>
    <scope>NUCLEOTIDE SEQUENCE [LARGE SCALE GENOMIC DNA]</scope>
    <source>
        <strain>JL03</strain>
    </source>
</reference>
<name>RLMKL_ACTPJ</name>
<accession>B0BRL8</accession>
<keyword id="KW-0963">Cytoplasm</keyword>
<keyword id="KW-0489">Methyltransferase</keyword>
<keyword id="KW-0694">RNA-binding</keyword>
<keyword id="KW-0698">rRNA processing</keyword>
<keyword id="KW-0949">S-adenosyl-L-methionine</keyword>
<keyword id="KW-0808">Transferase</keyword>
<sequence>MTTQITYFATAARGFEEMLKTELEQICQAECKVAQGGVHFTTTQRGAYQALLHSRLASRILLPLVTTKIFSDLDLYATIVGINWAEIFDPRDTFFVDFNGTNREIRNTQFGAMRVKDGVVDYFERKGFARPTVDKDHADIRIHVYLDRENMVVSLDLSGDALHMRGYREDTGKAPLRETLAAAIVLRSGWQKGTPLVDPMCGSGTLLIEAAQMQAGIAPQLHRKHWGFNAWKGHQQAVWKEVLEQAYLQQNEEIQPLFFGFDLDHRVLAKAKQNAKNAGVAHLIQWQQGDIAALKNPCPNQVGTVICNPPYGERLGTTPALIALYSVFGQRLKQQFSGWNASIFSGEPELLNCLRLRSHRQFKAKNGPLDCLQKNYQISERTAAEQQADELKFEQNAQVAPDFANRLAKNIKKIEKWAKQQGINAYRLYDADLPEYNLAVDRYDDHIVVQEYAAPKNIDEQKARQRLLDAVSATLYVTGVETNKLVLKVRQKQKGTNQYEKLANKGDYFYVTEYGAKLWVNLTDYLDTGLFLDHRLTRKMVGQMAKGKTFLNLFAYTGSATIHAALNGAKSTTTVDMSNTYLNWAEQNLELNNLPLRNNRLFQADCLQWLAECRERFELIFVDPPTFSNSKRMEDSWDVQRDHIKLMTQLKRILTTDGTIVFSNNKRGFKMDFEGLAELGLQAENISHKTLPLDFERNPQIHNCWIIRHIEN</sequence>
<organism>
    <name type="scientific">Actinobacillus pleuropneumoniae serotype 3 (strain JL03)</name>
    <dbReference type="NCBI Taxonomy" id="434271"/>
    <lineage>
        <taxon>Bacteria</taxon>
        <taxon>Pseudomonadati</taxon>
        <taxon>Pseudomonadota</taxon>
        <taxon>Gammaproteobacteria</taxon>
        <taxon>Pasteurellales</taxon>
        <taxon>Pasteurellaceae</taxon>
        <taxon>Actinobacillus</taxon>
    </lineage>
</organism>
<protein>
    <recommendedName>
        <fullName evidence="1">Ribosomal RNA large subunit methyltransferase K/L</fullName>
    </recommendedName>
    <domain>
        <recommendedName>
            <fullName evidence="1">23S rRNA m2G2445 methyltransferase</fullName>
            <ecNumber evidence="1">2.1.1.173</ecNumber>
        </recommendedName>
        <alternativeName>
            <fullName evidence="1">rRNA (guanine-N(2)-)-methyltransferase RlmL</fullName>
        </alternativeName>
    </domain>
    <domain>
        <recommendedName>
            <fullName evidence="1">23S rRNA m7G2069 methyltransferase</fullName>
            <ecNumber evidence="1">2.1.1.264</ecNumber>
        </recommendedName>
        <alternativeName>
            <fullName evidence="1">rRNA (guanine-N(7)-)-methyltransferase RlmK</fullName>
        </alternativeName>
    </domain>
</protein>
<feature type="chain" id="PRO_0000366718" description="Ribosomal RNA large subunit methyltransferase K/L">
    <location>
        <begin position="1"/>
        <end position="712"/>
    </location>
</feature>
<feature type="domain" description="THUMP" evidence="1">
    <location>
        <begin position="46"/>
        <end position="157"/>
    </location>
</feature>
<evidence type="ECO:0000255" key="1">
    <source>
        <dbReference type="HAMAP-Rule" id="MF_01858"/>
    </source>
</evidence>
<comment type="function">
    <text evidence="1">Specifically methylates the guanine in position 2445 (m2G2445) and the guanine in position 2069 (m7G2069) of 23S rRNA.</text>
</comment>
<comment type="catalytic activity">
    <reaction evidence="1">
        <text>guanosine(2445) in 23S rRNA + S-adenosyl-L-methionine = N(2)-methylguanosine(2445) in 23S rRNA + S-adenosyl-L-homocysteine + H(+)</text>
        <dbReference type="Rhea" id="RHEA:42740"/>
        <dbReference type="Rhea" id="RHEA-COMP:10215"/>
        <dbReference type="Rhea" id="RHEA-COMP:10216"/>
        <dbReference type="ChEBI" id="CHEBI:15378"/>
        <dbReference type="ChEBI" id="CHEBI:57856"/>
        <dbReference type="ChEBI" id="CHEBI:59789"/>
        <dbReference type="ChEBI" id="CHEBI:74269"/>
        <dbReference type="ChEBI" id="CHEBI:74481"/>
        <dbReference type="EC" id="2.1.1.173"/>
    </reaction>
</comment>
<comment type="catalytic activity">
    <reaction evidence="1">
        <text>guanosine(2069) in 23S rRNA + S-adenosyl-L-methionine = N(2)-methylguanosine(2069) in 23S rRNA + S-adenosyl-L-homocysteine + H(+)</text>
        <dbReference type="Rhea" id="RHEA:43772"/>
        <dbReference type="Rhea" id="RHEA-COMP:10688"/>
        <dbReference type="Rhea" id="RHEA-COMP:10689"/>
        <dbReference type="ChEBI" id="CHEBI:15378"/>
        <dbReference type="ChEBI" id="CHEBI:57856"/>
        <dbReference type="ChEBI" id="CHEBI:59789"/>
        <dbReference type="ChEBI" id="CHEBI:74269"/>
        <dbReference type="ChEBI" id="CHEBI:74481"/>
        <dbReference type="EC" id="2.1.1.264"/>
    </reaction>
</comment>
<comment type="subcellular location">
    <subcellularLocation>
        <location evidence="1">Cytoplasm</location>
    </subcellularLocation>
</comment>
<comment type="similarity">
    <text evidence="1">Belongs to the methyltransferase superfamily. RlmKL family.</text>
</comment>
<dbReference type="EC" id="2.1.1.173" evidence="1"/>
<dbReference type="EC" id="2.1.1.264" evidence="1"/>
<dbReference type="EMBL" id="CP000687">
    <property type="protein sequence ID" value="ABY68666.1"/>
    <property type="molecule type" value="Genomic_DNA"/>
</dbReference>
<dbReference type="SMR" id="B0BRL8"/>
<dbReference type="KEGG" id="apj:APJL_0060"/>
<dbReference type="HOGENOM" id="CLU_014042_2_0_6"/>
<dbReference type="Proteomes" id="UP000008547">
    <property type="component" value="Chromosome"/>
</dbReference>
<dbReference type="GO" id="GO:0005737">
    <property type="term" value="C:cytoplasm"/>
    <property type="evidence" value="ECO:0007669"/>
    <property type="project" value="UniProtKB-SubCell"/>
</dbReference>
<dbReference type="GO" id="GO:0052915">
    <property type="term" value="F:23S rRNA (guanine(2445)-N(2))-methyltransferase activity"/>
    <property type="evidence" value="ECO:0007669"/>
    <property type="project" value="UniProtKB-UniRule"/>
</dbReference>
<dbReference type="GO" id="GO:0003723">
    <property type="term" value="F:RNA binding"/>
    <property type="evidence" value="ECO:0007669"/>
    <property type="project" value="UniProtKB-KW"/>
</dbReference>
<dbReference type="GO" id="GO:0070043">
    <property type="term" value="F:rRNA (guanine-N7-)-methyltransferase activity"/>
    <property type="evidence" value="ECO:0007669"/>
    <property type="project" value="UniProtKB-UniRule"/>
</dbReference>
<dbReference type="CDD" id="cd02440">
    <property type="entry name" value="AdoMet_MTases"/>
    <property type="match status" value="1"/>
</dbReference>
<dbReference type="CDD" id="cd11715">
    <property type="entry name" value="THUMP_AdoMetMT"/>
    <property type="match status" value="1"/>
</dbReference>
<dbReference type="FunFam" id="3.30.750.80:FF:000001">
    <property type="entry name" value="Ribosomal RNA large subunit methyltransferase K/L"/>
    <property type="match status" value="1"/>
</dbReference>
<dbReference type="FunFam" id="3.40.50.150:FF:000039">
    <property type="entry name" value="Ribosomal RNA large subunit methyltransferase K/L"/>
    <property type="match status" value="1"/>
</dbReference>
<dbReference type="Gene3D" id="3.30.2130.30">
    <property type="match status" value="1"/>
</dbReference>
<dbReference type="Gene3D" id="3.30.750.80">
    <property type="entry name" value="RNA methyltransferase domain (HRMD) like"/>
    <property type="match status" value="1"/>
</dbReference>
<dbReference type="Gene3D" id="3.40.50.150">
    <property type="entry name" value="Vaccinia Virus protein VP39"/>
    <property type="match status" value="2"/>
</dbReference>
<dbReference type="HAMAP" id="MF_01858">
    <property type="entry name" value="23SrRNA_methyltr_KL"/>
    <property type="match status" value="1"/>
</dbReference>
<dbReference type="InterPro" id="IPR017244">
    <property type="entry name" value="23SrRNA_methyltr_KL"/>
</dbReference>
<dbReference type="InterPro" id="IPR002052">
    <property type="entry name" value="DNA_methylase_N6_adenine_CS"/>
</dbReference>
<dbReference type="InterPro" id="IPR000241">
    <property type="entry name" value="RlmKL-like_Mtase"/>
</dbReference>
<dbReference type="InterPro" id="IPR053943">
    <property type="entry name" value="RlmKL-like_Mtase_CS"/>
</dbReference>
<dbReference type="InterPro" id="IPR054170">
    <property type="entry name" value="RlmL_1st"/>
</dbReference>
<dbReference type="InterPro" id="IPR019614">
    <property type="entry name" value="SAM-dep_methyl-trfase"/>
</dbReference>
<dbReference type="InterPro" id="IPR029063">
    <property type="entry name" value="SAM-dependent_MTases_sf"/>
</dbReference>
<dbReference type="InterPro" id="IPR004114">
    <property type="entry name" value="THUMP_dom"/>
</dbReference>
<dbReference type="NCBIfam" id="NF008748">
    <property type="entry name" value="PRK11783.1"/>
    <property type="match status" value="1"/>
</dbReference>
<dbReference type="PANTHER" id="PTHR47313">
    <property type="entry name" value="RIBOSOMAL RNA LARGE SUBUNIT METHYLTRANSFERASE K/L"/>
    <property type="match status" value="1"/>
</dbReference>
<dbReference type="PANTHER" id="PTHR47313:SF1">
    <property type="entry name" value="RIBOSOMAL RNA LARGE SUBUNIT METHYLTRANSFERASE K_L"/>
    <property type="match status" value="1"/>
</dbReference>
<dbReference type="Pfam" id="PF10672">
    <property type="entry name" value="Methyltrans_SAM"/>
    <property type="match status" value="1"/>
</dbReference>
<dbReference type="Pfam" id="PF22020">
    <property type="entry name" value="RlmL_1st"/>
    <property type="match status" value="1"/>
</dbReference>
<dbReference type="Pfam" id="PF02926">
    <property type="entry name" value="THUMP"/>
    <property type="match status" value="1"/>
</dbReference>
<dbReference type="Pfam" id="PF01170">
    <property type="entry name" value="UPF0020"/>
    <property type="match status" value="1"/>
</dbReference>
<dbReference type="PIRSF" id="PIRSF037618">
    <property type="entry name" value="RNA_Mtase_bacteria_prd"/>
    <property type="match status" value="1"/>
</dbReference>
<dbReference type="SMART" id="SM00981">
    <property type="entry name" value="THUMP"/>
    <property type="match status" value="1"/>
</dbReference>
<dbReference type="SUPFAM" id="SSF53335">
    <property type="entry name" value="S-adenosyl-L-methionine-dependent methyltransferases"/>
    <property type="match status" value="2"/>
</dbReference>
<dbReference type="PROSITE" id="PS51165">
    <property type="entry name" value="THUMP"/>
    <property type="match status" value="1"/>
</dbReference>
<dbReference type="PROSITE" id="PS01261">
    <property type="entry name" value="UPF0020"/>
    <property type="match status" value="1"/>
</dbReference>
<proteinExistence type="inferred from homology"/>
<gene>
    <name evidence="1" type="primary">rlmL</name>
    <name type="ordered locus">APJL_0060</name>
</gene>